<keyword id="KW-0665">Pyrimidine biosynthesis</keyword>
<keyword id="KW-1185">Reference proteome</keyword>
<keyword id="KW-0808">Transferase</keyword>
<reference key="1">
    <citation type="journal article" date="2007" name="Genome Res.">
        <title>Genome sequence of a proteolytic (Group I) Clostridium botulinum strain Hall A and comparative analysis of the clostridial genomes.</title>
        <authorList>
            <person name="Sebaihia M."/>
            <person name="Peck M.W."/>
            <person name="Minton N.P."/>
            <person name="Thomson N.R."/>
            <person name="Holden M.T.G."/>
            <person name="Mitchell W.J."/>
            <person name="Carter A.T."/>
            <person name="Bentley S.D."/>
            <person name="Mason D.R."/>
            <person name="Crossman L."/>
            <person name="Paul C.J."/>
            <person name="Ivens A."/>
            <person name="Wells-Bennik M.H.J."/>
            <person name="Davis I.J."/>
            <person name="Cerdeno-Tarraga A.M."/>
            <person name="Churcher C."/>
            <person name="Quail M.A."/>
            <person name="Chillingworth T."/>
            <person name="Feltwell T."/>
            <person name="Fraser A."/>
            <person name="Goodhead I."/>
            <person name="Hance Z."/>
            <person name="Jagels K."/>
            <person name="Larke N."/>
            <person name="Maddison M."/>
            <person name="Moule S."/>
            <person name="Mungall K."/>
            <person name="Norbertczak H."/>
            <person name="Rabbinowitsch E."/>
            <person name="Sanders M."/>
            <person name="Simmonds M."/>
            <person name="White B."/>
            <person name="Whithead S."/>
            <person name="Parkhill J."/>
        </authorList>
    </citation>
    <scope>NUCLEOTIDE SEQUENCE [LARGE SCALE GENOMIC DNA]</scope>
    <source>
        <strain>Hall / ATCC 3502 / NCTC 13319 / Type A</strain>
    </source>
</reference>
<reference key="2">
    <citation type="journal article" date="2007" name="PLoS ONE">
        <title>Analysis of the neurotoxin complex genes in Clostridium botulinum A1-A4 and B1 strains: BoNT/A3, /Ba4 and /B1 clusters are located within plasmids.</title>
        <authorList>
            <person name="Smith T.J."/>
            <person name="Hill K.K."/>
            <person name="Foley B.T."/>
            <person name="Detter J.C."/>
            <person name="Munk A.C."/>
            <person name="Bruce D.C."/>
            <person name="Doggett N.A."/>
            <person name="Smith L.A."/>
            <person name="Marks J.D."/>
            <person name="Xie G."/>
            <person name="Brettin T.S."/>
        </authorList>
    </citation>
    <scope>NUCLEOTIDE SEQUENCE [LARGE SCALE GENOMIC DNA]</scope>
    <source>
        <strain>Hall / ATCC 3502 / NCTC 13319 / Type A</strain>
    </source>
</reference>
<proteinExistence type="inferred from homology"/>
<protein>
    <recommendedName>
        <fullName evidence="1">Aspartate carbamoyltransferase catalytic subunit</fullName>
        <ecNumber evidence="1">2.1.3.2</ecNumber>
    </recommendedName>
    <alternativeName>
        <fullName evidence="1">Aspartate transcarbamylase</fullName>
        <shortName evidence="1">ATCase</shortName>
    </alternativeName>
</protein>
<sequence length="307" mass="34979">MLKGRNLLDPMDFSLEELEEVFKLADEIIEEPEKFLHVCDGKILATLFYEPSTRTRFSFEAAMLRLGGQVIGFSEPNSSSVAKGESVADTIRTVGCYADIAAMRHPKEGAPAIAAMYSDIPVINAGDGSHQHPTQTLTDLLTIRSLKGDLSNLTIGCCGDLKFGRTVHSLVKALSRYKNNKFVFMSPEELKIPDYIRKEILEKNNIEYKEISKMEDAMAELDILYMTRVQRERFFNEDDYVRLKDSYILDGEKMKYAKKDMMVLHPLPRVNEIAYEIDQDPRGCYFKQAKYGMYVRMALIAKLLGVR</sequence>
<evidence type="ECO:0000255" key="1">
    <source>
        <dbReference type="HAMAP-Rule" id="MF_00001"/>
    </source>
</evidence>
<comment type="function">
    <text evidence="1">Catalyzes the condensation of carbamoyl phosphate and aspartate to form carbamoyl aspartate and inorganic phosphate, the committed step in the de novo pyrimidine nucleotide biosynthesis pathway.</text>
</comment>
<comment type="catalytic activity">
    <reaction evidence="1">
        <text>carbamoyl phosphate + L-aspartate = N-carbamoyl-L-aspartate + phosphate + H(+)</text>
        <dbReference type="Rhea" id="RHEA:20013"/>
        <dbReference type="ChEBI" id="CHEBI:15378"/>
        <dbReference type="ChEBI" id="CHEBI:29991"/>
        <dbReference type="ChEBI" id="CHEBI:32814"/>
        <dbReference type="ChEBI" id="CHEBI:43474"/>
        <dbReference type="ChEBI" id="CHEBI:58228"/>
        <dbReference type="EC" id="2.1.3.2"/>
    </reaction>
</comment>
<comment type="pathway">
    <text evidence="1">Pyrimidine metabolism; UMP biosynthesis via de novo pathway; (S)-dihydroorotate from bicarbonate: step 2/3.</text>
</comment>
<comment type="subunit">
    <text evidence="1">Heterododecamer (2C3:3R2) of six catalytic PyrB chains organized as two trimers (C3), and six regulatory PyrI chains organized as three dimers (R2).</text>
</comment>
<comment type="similarity">
    <text evidence="1">Belongs to the aspartate/ornithine carbamoyltransferase superfamily. ATCase family.</text>
</comment>
<gene>
    <name evidence="1" type="primary">pyrB</name>
    <name type="ordered locus">CBO3241</name>
    <name type="ordered locus">CLC_3152</name>
</gene>
<organism>
    <name type="scientific">Clostridium botulinum (strain Hall / ATCC 3502 / NCTC 13319 / Type A)</name>
    <dbReference type="NCBI Taxonomy" id="441771"/>
    <lineage>
        <taxon>Bacteria</taxon>
        <taxon>Bacillati</taxon>
        <taxon>Bacillota</taxon>
        <taxon>Clostridia</taxon>
        <taxon>Eubacteriales</taxon>
        <taxon>Clostridiaceae</taxon>
        <taxon>Clostridium</taxon>
    </lineage>
</organism>
<accession>A5I6X1</accession>
<accession>A7G856</accession>
<feature type="chain" id="PRO_0000321089" description="Aspartate carbamoyltransferase catalytic subunit">
    <location>
        <begin position="1"/>
        <end position="307"/>
    </location>
</feature>
<feature type="binding site" evidence="1">
    <location>
        <position position="54"/>
    </location>
    <ligand>
        <name>carbamoyl phosphate</name>
        <dbReference type="ChEBI" id="CHEBI:58228"/>
    </ligand>
</feature>
<feature type="binding site" evidence="1">
    <location>
        <position position="55"/>
    </location>
    <ligand>
        <name>carbamoyl phosphate</name>
        <dbReference type="ChEBI" id="CHEBI:58228"/>
    </ligand>
</feature>
<feature type="binding site" evidence="1">
    <location>
        <position position="83"/>
    </location>
    <ligand>
        <name>L-aspartate</name>
        <dbReference type="ChEBI" id="CHEBI:29991"/>
    </ligand>
</feature>
<feature type="binding site" evidence="1">
    <location>
        <position position="104"/>
    </location>
    <ligand>
        <name>carbamoyl phosphate</name>
        <dbReference type="ChEBI" id="CHEBI:58228"/>
    </ligand>
</feature>
<feature type="binding site" evidence="1">
    <location>
        <position position="132"/>
    </location>
    <ligand>
        <name>carbamoyl phosphate</name>
        <dbReference type="ChEBI" id="CHEBI:58228"/>
    </ligand>
</feature>
<feature type="binding site" evidence="1">
    <location>
        <position position="135"/>
    </location>
    <ligand>
        <name>carbamoyl phosphate</name>
        <dbReference type="ChEBI" id="CHEBI:58228"/>
    </ligand>
</feature>
<feature type="binding site" evidence="1">
    <location>
        <position position="165"/>
    </location>
    <ligand>
        <name>L-aspartate</name>
        <dbReference type="ChEBI" id="CHEBI:29991"/>
    </ligand>
</feature>
<feature type="binding site" evidence="1">
    <location>
        <position position="228"/>
    </location>
    <ligand>
        <name>L-aspartate</name>
        <dbReference type="ChEBI" id="CHEBI:29991"/>
    </ligand>
</feature>
<feature type="binding site" evidence="1">
    <location>
        <position position="267"/>
    </location>
    <ligand>
        <name>carbamoyl phosphate</name>
        <dbReference type="ChEBI" id="CHEBI:58228"/>
    </ligand>
</feature>
<feature type="binding site" evidence="1">
    <location>
        <position position="268"/>
    </location>
    <ligand>
        <name>carbamoyl phosphate</name>
        <dbReference type="ChEBI" id="CHEBI:58228"/>
    </ligand>
</feature>
<name>PYRB_CLOBH</name>
<dbReference type="EC" id="2.1.3.2" evidence="1"/>
<dbReference type="EMBL" id="CP000727">
    <property type="protein sequence ID" value="ABS39072.1"/>
    <property type="molecule type" value="Genomic_DNA"/>
</dbReference>
<dbReference type="EMBL" id="AM412317">
    <property type="protein sequence ID" value="CAL84803.1"/>
    <property type="molecule type" value="Genomic_DNA"/>
</dbReference>
<dbReference type="RefSeq" id="WP_012048210.1">
    <property type="nucleotide sequence ID" value="NC_009698.1"/>
</dbReference>
<dbReference type="RefSeq" id="YP_001255731.1">
    <property type="nucleotide sequence ID" value="NC_009495.1"/>
</dbReference>
<dbReference type="RefSeq" id="YP_001388971.1">
    <property type="nucleotide sequence ID" value="NC_009698.1"/>
</dbReference>
<dbReference type="SMR" id="A5I6X1"/>
<dbReference type="GeneID" id="5187965"/>
<dbReference type="KEGG" id="cbh:CLC_3152"/>
<dbReference type="KEGG" id="cbo:CBO3241"/>
<dbReference type="PATRIC" id="fig|413999.7.peg.3220"/>
<dbReference type="HOGENOM" id="CLU_043846_1_2_9"/>
<dbReference type="UniPathway" id="UPA00070">
    <property type="reaction ID" value="UER00116"/>
</dbReference>
<dbReference type="PRO" id="PR:A5I6X1"/>
<dbReference type="Proteomes" id="UP000001986">
    <property type="component" value="Chromosome"/>
</dbReference>
<dbReference type="GO" id="GO:0005737">
    <property type="term" value="C:cytoplasm"/>
    <property type="evidence" value="ECO:0000318"/>
    <property type="project" value="GO_Central"/>
</dbReference>
<dbReference type="GO" id="GO:0016597">
    <property type="term" value="F:amino acid binding"/>
    <property type="evidence" value="ECO:0007669"/>
    <property type="project" value="InterPro"/>
</dbReference>
<dbReference type="GO" id="GO:0004070">
    <property type="term" value="F:aspartate carbamoyltransferase activity"/>
    <property type="evidence" value="ECO:0007669"/>
    <property type="project" value="UniProtKB-UniRule"/>
</dbReference>
<dbReference type="GO" id="GO:0006207">
    <property type="term" value="P:'de novo' pyrimidine nucleobase biosynthetic process"/>
    <property type="evidence" value="ECO:0007669"/>
    <property type="project" value="InterPro"/>
</dbReference>
<dbReference type="GO" id="GO:0044205">
    <property type="term" value="P:'de novo' UMP biosynthetic process"/>
    <property type="evidence" value="ECO:0007669"/>
    <property type="project" value="UniProtKB-UniRule"/>
</dbReference>
<dbReference type="GO" id="GO:0006541">
    <property type="term" value="P:glutamine metabolic process"/>
    <property type="evidence" value="ECO:0000318"/>
    <property type="project" value="GO_Central"/>
</dbReference>
<dbReference type="FunFam" id="3.40.50.1370:FF:000002">
    <property type="entry name" value="Aspartate carbamoyltransferase 2"/>
    <property type="match status" value="1"/>
</dbReference>
<dbReference type="Gene3D" id="3.40.50.1370">
    <property type="entry name" value="Aspartate/ornithine carbamoyltransferase"/>
    <property type="match status" value="2"/>
</dbReference>
<dbReference type="HAMAP" id="MF_00001">
    <property type="entry name" value="Asp_carb_tr"/>
    <property type="match status" value="1"/>
</dbReference>
<dbReference type="InterPro" id="IPR006132">
    <property type="entry name" value="Asp/Orn_carbamoyltranf_P-bd"/>
</dbReference>
<dbReference type="InterPro" id="IPR006130">
    <property type="entry name" value="Asp/Orn_carbamoylTrfase"/>
</dbReference>
<dbReference type="InterPro" id="IPR036901">
    <property type="entry name" value="Asp/Orn_carbamoylTrfase_sf"/>
</dbReference>
<dbReference type="InterPro" id="IPR002082">
    <property type="entry name" value="Asp_carbamoyltransf"/>
</dbReference>
<dbReference type="InterPro" id="IPR006131">
    <property type="entry name" value="Asp_carbamoyltransf_Asp/Orn-bd"/>
</dbReference>
<dbReference type="NCBIfam" id="TIGR00670">
    <property type="entry name" value="asp_carb_tr"/>
    <property type="match status" value="1"/>
</dbReference>
<dbReference type="NCBIfam" id="NF002032">
    <property type="entry name" value="PRK00856.1"/>
    <property type="match status" value="1"/>
</dbReference>
<dbReference type="PANTHER" id="PTHR45753:SF6">
    <property type="entry name" value="ASPARTATE CARBAMOYLTRANSFERASE"/>
    <property type="match status" value="1"/>
</dbReference>
<dbReference type="PANTHER" id="PTHR45753">
    <property type="entry name" value="ORNITHINE CARBAMOYLTRANSFERASE, MITOCHONDRIAL"/>
    <property type="match status" value="1"/>
</dbReference>
<dbReference type="Pfam" id="PF00185">
    <property type="entry name" value="OTCace"/>
    <property type="match status" value="1"/>
</dbReference>
<dbReference type="Pfam" id="PF02729">
    <property type="entry name" value="OTCace_N"/>
    <property type="match status" value="1"/>
</dbReference>
<dbReference type="PRINTS" id="PR00100">
    <property type="entry name" value="AOTCASE"/>
</dbReference>
<dbReference type="PRINTS" id="PR00101">
    <property type="entry name" value="ATCASE"/>
</dbReference>
<dbReference type="SUPFAM" id="SSF53671">
    <property type="entry name" value="Aspartate/ornithine carbamoyltransferase"/>
    <property type="match status" value="1"/>
</dbReference>
<dbReference type="PROSITE" id="PS00097">
    <property type="entry name" value="CARBAMOYLTRANSFERASE"/>
    <property type="match status" value="1"/>
</dbReference>